<dbReference type="EC" id="2.7.7.59" evidence="1"/>
<dbReference type="EC" id="3.1.4.-" evidence="1"/>
<dbReference type="EMBL" id="FM209186">
    <property type="protein sequence ID" value="CAW26105.1"/>
    <property type="molecule type" value="Genomic_DNA"/>
</dbReference>
<dbReference type="RefSeq" id="WP_003098610.1">
    <property type="nucleotide sequence ID" value="NC_011770.1"/>
</dbReference>
<dbReference type="SMR" id="B7V7F5"/>
<dbReference type="KEGG" id="pag:PLES_13771"/>
<dbReference type="HOGENOM" id="CLU_012833_0_0_6"/>
<dbReference type="GO" id="GO:0008773">
    <property type="term" value="F:[protein-PII] uridylyltransferase activity"/>
    <property type="evidence" value="ECO:0007669"/>
    <property type="project" value="UniProtKB-UniRule"/>
</dbReference>
<dbReference type="GO" id="GO:0008081">
    <property type="term" value="F:phosphoric diester hydrolase activity"/>
    <property type="evidence" value="ECO:0007669"/>
    <property type="project" value="UniProtKB-UniRule"/>
</dbReference>
<dbReference type="GO" id="GO:0006808">
    <property type="term" value="P:regulation of nitrogen utilization"/>
    <property type="evidence" value="ECO:0007669"/>
    <property type="project" value="UniProtKB-UniRule"/>
</dbReference>
<dbReference type="CDD" id="cd04899">
    <property type="entry name" value="ACT_ACR-UUR-like_2"/>
    <property type="match status" value="1"/>
</dbReference>
<dbReference type="CDD" id="cd04900">
    <property type="entry name" value="ACT_UUR-like_1"/>
    <property type="match status" value="1"/>
</dbReference>
<dbReference type="CDD" id="cd00077">
    <property type="entry name" value="HDc"/>
    <property type="match status" value="1"/>
</dbReference>
<dbReference type="CDD" id="cd05401">
    <property type="entry name" value="NT_GlnE_GlnD_like"/>
    <property type="match status" value="1"/>
</dbReference>
<dbReference type="FunFam" id="1.10.3090.10:FF:000005">
    <property type="entry name" value="Bifunctional uridylyltransferase/uridylyl-removing enzyme"/>
    <property type="match status" value="1"/>
</dbReference>
<dbReference type="Gene3D" id="3.30.460.10">
    <property type="entry name" value="Beta Polymerase, domain 2"/>
    <property type="match status" value="1"/>
</dbReference>
<dbReference type="Gene3D" id="1.10.3090.10">
    <property type="entry name" value="cca-adding enzyme, domain 2"/>
    <property type="match status" value="1"/>
</dbReference>
<dbReference type="Gene3D" id="1.20.120.330">
    <property type="entry name" value="Nucleotidyltransferases domain 2"/>
    <property type="match status" value="1"/>
</dbReference>
<dbReference type="HAMAP" id="MF_00277">
    <property type="entry name" value="PII_uridylyl_transf"/>
    <property type="match status" value="1"/>
</dbReference>
<dbReference type="InterPro" id="IPR045865">
    <property type="entry name" value="ACT-like_dom_sf"/>
</dbReference>
<dbReference type="InterPro" id="IPR002912">
    <property type="entry name" value="ACT_dom"/>
</dbReference>
<dbReference type="InterPro" id="IPR003607">
    <property type="entry name" value="HD/PDEase_dom"/>
</dbReference>
<dbReference type="InterPro" id="IPR006674">
    <property type="entry name" value="HD_domain"/>
</dbReference>
<dbReference type="InterPro" id="IPR043519">
    <property type="entry name" value="NT_sf"/>
</dbReference>
<dbReference type="InterPro" id="IPR013546">
    <property type="entry name" value="PII_UdlTrfase/GS_AdlTrfase"/>
</dbReference>
<dbReference type="InterPro" id="IPR002934">
    <property type="entry name" value="Polymerase_NTP_transf_dom"/>
</dbReference>
<dbReference type="InterPro" id="IPR010043">
    <property type="entry name" value="UTase/UR"/>
</dbReference>
<dbReference type="NCBIfam" id="NF001366">
    <property type="entry name" value="PRK00275.1"/>
    <property type="match status" value="1"/>
</dbReference>
<dbReference type="NCBIfam" id="TIGR01693">
    <property type="entry name" value="UTase_glnD"/>
    <property type="match status" value="1"/>
</dbReference>
<dbReference type="PANTHER" id="PTHR47320">
    <property type="entry name" value="BIFUNCTIONAL URIDYLYLTRANSFERASE/URIDYLYL-REMOVING ENZYME"/>
    <property type="match status" value="1"/>
</dbReference>
<dbReference type="PANTHER" id="PTHR47320:SF1">
    <property type="entry name" value="BIFUNCTIONAL URIDYLYLTRANSFERASE_URIDYLYL-REMOVING ENZYME"/>
    <property type="match status" value="1"/>
</dbReference>
<dbReference type="Pfam" id="PF01842">
    <property type="entry name" value="ACT"/>
    <property type="match status" value="1"/>
</dbReference>
<dbReference type="Pfam" id="PF08335">
    <property type="entry name" value="GlnD_UR_UTase"/>
    <property type="match status" value="1"/>
</dbReference>
<dbReference type="Pfam" id="PF01966">
    <property type="entry name" value="HD"/>
    <property type="match status" value="1"/>
</dbReference>
<dbReference type="Pfam" id="PF01909">
    <property type="entry name" value="NTP_transf_2"/>
    <property type="match status" value="1"/>
</dbReference>
<dbReference type="PIRSF" id="PIRSF006288">
    <property type="entry name" value="PII_uridyltransf"/>
    <property type="match status" value="1"/>
</dbReference>
<dbReference type="SMART" id="SM00471">
    <property type="entry name" value="HDc"/>
    <property type="match status" value="1"/>
</dbReference>
<dbReference type="SUPFAM" id="SSF55021">
    <property type="entry name" value="ACT-like"/>
    <property type="match status" value="1"/>
</dbReference>
<dbReference type="SUPFAM" id="SSF109604">
    <property type="entry name" value="HD-domain/PDEase-like"/>
    <property type="match status" value="1"/>
</dbReference>
<dbReference type="SUPFAM" id="SSF81301">
    <property type="entry name" value="Nucleotidyltransferase"/>
    <property type="match status" value="1"/>
</dbReference>
<dbReference type="SUPFAM" id="SSF81593">
    <property type="entry name" value="Nucleotidyltransferase substrate binding subunit/domain"/>
    <property type="match status" value="1"/>
</dbReference>
<dbReference type="PROSITE" id="PS51671">
    <property type="entry name" value="ACT"/>
    <property type="match status" value="2"/>
</dbReference>
<dbReference type="PROSITE" id="PS51831">
    <property type="entry name" value="HD"/>
    <property type="match status" value="1"/>
</dbReference>
<name>GLND_PSEA8</name>
<protein>
    <recommendedName>
        <fullName evidence="1">Bifunctional uridylyltransferase/uridylyl-removing enzyme</fullName>
        <shortName evidence="1">UTase/UR</shortName>
    </recommendedName>
    <alternativeName>
        <fullName evidence="1">Bifunctional [protein-PII] modification enzyme</fullName>
    </alternativeName>
    <alternativeName>
        <fullName evidence="1">Bifunctional nitrogen sensor protein</fullName>
    </alternativeName>
    <domain>
        <recommendedName>
            <fullName evidence="1">[Protein-PII] uridylyltransferase</fullName>
            <shortName evidence="1">PII uridylyltransferase</shortName>
            <shortName evidence="1">UTase</shortName>
            <ecNumber evidence="1">2.7.7.59</ecNumber>
        </recommendedName>
    </domain>
    <domain>
        <recommendedName>
            <fullName evidence="1">[Protein-PII]-UMP uridylyl-removing enzyme</fullName>
            <shortName evidence="1">UR</shortName>
            <ecNumber evidence="1">3.1.4.-</ecNumber>
        </recommendedName>
    </domain>
</protein>
<keyword id="KW-0378">Hydrolase</keyword>
<keyword id="KW-0460">Magnesium</keyword>
<keyword id="KW-0511">Multifunctional enzyme</keyword>
<keyword id="KW-0548">Nucleotidyltransferase</keyword>
<keyword id="KW-0677">Repeat</keyword>
<keyword id="KW-0808">Transferase</keyword>
<sequence length="900" mass="103432">MPQVDPELFDRGQFQAELALKSSPIAAFKKAIRQFREVLDNRFNSGRDIRRLIEDRAWCVDQILQQAWQRFDWGDDADIALVAVGGYGRGELHPYSDVDLLILLDSEDQESFREPIEGFLTLLWDIGLEVGQSVRSVQQCAEEARADLTVITTLMECRTICGPDSLRQRMLRVTGSAHMWPSKEFFLAKRHEQQRRHAKYNDTEYNLEPNVKGSPGGLRDIQTILWMARRQFGSLNLHALVREGFLVESECSMLASSQEFLWRVRYALHMLAGRAEDRLLFDHQRSIARLFGYEDNDVKLAVERFMQKYYRVVMAISELNDLIIQHFEEVILPCEQPVQIQPLNSRFQLRDGYIEVTHPNVFKRTPFALLEIFVLMAQHPEIKGVRADTIRLLRDSRHLIDDEFRHDIRNTSLFIELFKSSQGIHRNLRRMNRYGILGRYLPEFGHIIGQMQHDLFHIYTVDAHTLNLIKHLRKLNRPEMAEKYPLASKIIDRLPKPELIYIAGLYHDIAKGRGGDHSELGAVDAEAFCQSHQLPLWDTQLVSWLVQNHLVMSTTAQRKDLSDPQVIFDFAQLVGDQTHLDYLYVLTVADINATNPTLWNSWRASLLRQLYTETKRALRRGLENPVDREEQIRQTQTAALDQLVRNGIDQDDAEQLWSQLGDDYFLRHTAGDVAWHTEAILQHPDDGTPLVLIKETTQREFESGSQIFIYAADQHDFFAVTVAAMDQLNLSIQDARIITSTSQFTLDTYIVLDADGDSIGNNPERIAEIREGLIDALKNPDDYPTIIQRRVPRQLKHFAFAPQVTISTDALRQVSVLEVIAPDRPGLLARIGGIFLDFDLSVQNAKIATLGERVEDVFYITDARNQPLADPDLCKRLQAALVEQLSQDNGRDTLPTRINF</sequence>
<gene>
    <name evidence="1" type="primary">glnD</name>
    <name type="ordered locus">PLES_13771</name>
</gene>
<feature type="chain" id="PRO_1000119368" description="Bifunctional uridylyltransferase/uridylyl-removing enzyme">
    <location>
        <begin position="1"/>
        <end position="900"/>
    </location>
</feature>
<feature type="domain" description="HD" evidence="2">
    <location>
        <begin position="461"/>
        <end position="583"/>
    </location>
</feature>
<feature type="domain" description="ACT 1" evidence="1">
    <location>
        <begin position="706"/>
        <end position="789"/>
    </location>
</feature>
<feature type="domain" description="ACT 2" evidence="1">
    <location>
        <begin position="816"/>
        <end position="891"/>
    </location>
</feature>
<feature type="region of interest" description="Uridylyltransferase">
    <location>
        <begin position="1"/>
        <end position="342"/>
    </location>
</feature>
<feature type="region of interest" description="Uridylyl-removing">
    <location>
        <begin position="343"/>
        <end position="705"/>
    </location>
</feature>
<reference key="1">
    <citation type="journal article" date="2009" name="Genome Res.">
        <title>Newly introduced genomic prophage islands are critical determinants of in vivo competitiveness in the Liverpool epidemic strain of Pseudomonas aeruginosa.</title>
        <authorList>
            <person name="Winstanley C."/>
            <person name="Langille M.G.I."/>
            <person name="Fothergill J.L."/>
            <person name="Kukavica-Ibrulj I."/>
            <person name="Paradis-Bleau C."/>
            <person name="Sanschagrin F."/>
            <person name="Thomson N.R."/>
            <person name="Winsor G.L."/>
            <person name="Quail M.A."/>
            <person name="Lennard N."/>
            <person name="Bignell A."/>
            <person name="Clarke L."/>
            <person name="Seeger K."/>
            <person name="Saunders D."/>
            <person name="Harris D."/>
            <person name="Parkhill J."/>
            <person name="Hancock R.E.W."/>
            <person name="Brinkman F.S.L."/>
            <person name="Levesque R.C."/>
        </authorList>
    </citation>
    <scope>NUCLEOTIDE SEQUENCE [LARGE SCALE GENOMIC DNA]</scope>
    <source>
        <strain>LESB58</strain>
    </source>
</reference>
<evidence type="ECO:0000255" key="1">
    <source>
        <dbReference type="HAMAP-Rule" id="MF_00277"/>
    </source>
</evidence>
<evidence type="ECO:0000255" key="2">
    <source>
        <dbReference type="PROSITE-ProRule" id="PRU01175"/>
    </source>
</evidence>
<organism>
    <name type="scientific">Pseudomonas aeruginosa (strain LESB58)</name>
    <dbReference type="NCBI Taxonomy" id="557722"/>
    <lineage>
        <taxon>Bacteria</taxon>
        <taxon>Pseudomonadati</taxon>
        <taxon>Pseudomonadota</taxon>
        <taxon>Gammaproteobacteria</taxon>
        <taxon>Pseudomonadales</taxon>
        <taxon>Pseudomonadaceae</taxon>
        <taxon>Pseudomonas</taxon>
    </lineage>
</organism>
<accession>B7V7F5</accession>
<comment type="function">
    <text evidence="1">Modifies, by uridylylation and deuridylylation, the PII regulatory proteins (GlnB and homologs), in response to the nitrogen status of the cell that GlnD senses through the glutamine level. Under low glutamine levels, catalyzes the conversion of the PII proteins and UTP to PII-UMP and PPi, while under higher glutamine levels, GlnD hydrolyzes PII-UMP to PII and UMP (deuridylylation). Thus, controls uridylylation state and activity of the PII proteins, and plays an important role in the regulation of nitrogen assimilation and metabolism.</text>
</comment>
<comment type="catalytic activity">
    <reaction evidence="1">
        <text>[protein-PII]-L-tyrosine + UTP = [protein-PII]-uridylyl-L-tyrosine + diphosphate</text>
        <dbReference type="Rhea" id="RHEA:13673"/>
        <dbReference type="Rhea" id="RHEA-COMP:12147"/>
        <dbReference type="Rhea" id="RHEA-COMP:12148"/>
        <dbReference type="ChEBI" id="CHEBI:33019"/>
        <dbReference type="ChEBI" id="CHEBI:46398"/>
        <dbReference type="ChEBI" id="CHEBI:46858"/>
        <dbReference type="ChEBI" id="CHEBI:90602"/>
        <dbReference type="EC" id="2.7.7.59"/>
    </reaction>
</comment>
<comment type="catalytic activity">
    <reaction evidence="1">
        <text>[protein-PII]-uridylyl-L-tyrosine + H2O = [protein-PII]-L-tyrosine + UMP + H(+)</text>
        <dbReference type="Rhea" id="RHEA:48600"/>
        <dbReference type="Rhea" id="RHEA-COMP:12147"/>
        <dbReference type="Rhea" id="RHEA-COMP:12148"/>
        <dbReference type="ChEBI" id="CHEBI:15377"/>
        <dbReference type="ChEBI" id="CHEBI:15378"/>
        <dbReference type="ChEBI" id="CHEBI:46858"/>
        <dbReference type="ChEBI" id="CHEBI:57865"/>
        <dbReference type="ChEBI" id="CHEBI:90602"/>
    </reaction>
</comment>
<comment type="cofactor">
    <cofactor evidence="1">
        <name>Mg(2+)</name>
        <dbReference type="ChEBI" id="CHEBI:18420"/>
    </cofactor>
</comment>
<comment type="activity regulation">
    <text evidence="1">Uridylyltransferase (UTase) activity is inhibited by glutamine, while glutamine activates uridylyl-removing (UR) activity.</text>
</comment>
<comment type="domain">
    <text evidence="1">Has four distinct domains: an N-terminal nucleotidyltransferase (NT) domain responsible for UTase activity, a central HD domain that encodes UR activity, and two C-terminal ACT domains that seem to have a role in glutamine sensing.</text>
</comment>
<comment type="similarity">
    <text evidence="1">Belongs to the GlnD family.</text>
</comment>
<proteinExistence type="inferred from homology"/>